<reference key="1">
    <citation type="journal article" date="2006" name="BMC Genomics">
        <title>Complete genome sequence of Shigella flexneri 5b and comparison with Shigella flexneri 2a.</title>
        <authorList>
            <person name="Nie H."/>
            <person name="Yang F."/>
            <person name="Zhang X."/>
            <person name="Yang J."/>
            <person name="Chen L."/>
            <person name="Wang J."/>
            <person name="Xiong Z."/>
            <person name="Peng J."/>
            <person name="Sun L."/>
            <person name="Dong J."/>
            <person name="Xue Y."/>
            <person name="Xu X."/>
            <person name="Chen S."/>
            <person name="Yao Z."/>
            <person name="Shen Y."/>
            <person name="Jin Q."/>
        </authorList>
    </citation>
    <scope>NUCLEOTIDE SEQUENCE [LARGE SCALE GENOMIC DNA]</scope>
    <source>
        <strain>8401</strain>
    </source>
</reference>
<comment type="function">
    <text evidence="1">Catalyzes the reversible adenylation of nicotinate mononucleotide (NaMN) to nicotinic acid adenine dinucleotide (NaAD).</text>
</comment>
<comment type="catalytic activity">
    <reaction evidence="1">
        <text>nicotinate beta-D-ribonucleotide + ATP + H(+) = deamido-NAD(+) + diphosphate</text>
        <dbReference type="Rhea" id="RHEA:22860"/>
        <dbReference type="ChEBI" id="CHEBI:15378"/>
        <dbReference type="ChEBI" id="CHEBI:30616"/>
        <dbReference type="ChEBI" id="CHEBI:33019"/>
        <dbReference type="ChEBI" id="CHEBI:57502"/>
        <dbReference type="ChEBI" id="CHEBI:58437"/>
        <dbReference type="EC" id="2.7.7.18"/>
    </reaction>
</comment>
<comment type="pathway">
    <text evidence="1">Cofactor biosynthesis; NAD(+) biosynthesis; deamido-NAD(+) from nicotinate D-ribonucleotide: step 1/1.</text>
</comment>
<comment type="similarity">
    <text evidence="1">Belongs to the NadD family.</text>
</comment>
<keyword id="KW-0067">ATP-binding</keyword>
<keyword id="KW-0520">NAD</keyword>
<keyword id="KW-0547">Nucleotide-binding</keyword>
<keyword id="KW-0548">Nucleotidyltransferase</keyword>
<keyword id="KW-0662">Pyridine nucleotide biosynthesis</keyword>
<keyword id="KW-0808">Transferase</keyword>
<sequence length="213" mass="24528">MKSLQALFGGTFDPVHYGHLKPVETLANLIGLTRVTIIPNNVPPHRPQPEANSVQRKHMLELAIADKPLFTLDERELKRNAPSYTAQTLKEWRQEQGPDVPLAFIIGQDSLLTFPTWYEYETILDNAHLIVCRRPGYPLEMAQPQYQQWLEDHLTHNPEDLHLQPAGKIYLAETPWFNISATIIRERLQNGESCEDLLPEPVLTYINQQGLYR</sequence>
<accession>Q0T6P9</accession>
<protein>
    <recommendedName>
        <fullName evidence="1">Probable nicotinate-nucleotide adenylyltransferase</fullName>
        <ecNumber evidence="1">2.7.7.18</ecNumber>
    </recommendedName>
    <alternativeName>
        <fullName evidence="1">Deamido-NAD(+) diphosphorylase</fullName>
    </alternativeName>
    <alternativeName>
        <fullName evidence="1">Deamido-NAD(+) pyrophosphorylase</fullName>
    </alternativeName>
    <alternativeName>
        <fullName evidence="1">Nicotinate mononucleotide adenylyltransferase</fullName>
        <shortName evidence="1">NaMN adenylyltransferase</shortName>
    </alternativeName>
</protein>
<organism>
    <name type="scientific">Shigella flexneri serotype 5b (strain 8401)</name>
    <dbReference type="NCBI Taxonomy" id="373384"/>
    <lineage>
        <taxon>Bacteria</taxon>
        <taxon>Pseudomonadati</taxon>
        <taxon>Pseudomonadota</taxon>
        <taxon>Gammaproteobacteria</taxon>
        <taxon>Enterobacterales</taxon>
        <taxon>Enterobacteriaceae</taxon>
        <taxon>Shigella</taxon>
    </lineage>
</organism>
<name>NADD_SHIF8</name>
<feature type="chain" id="PRO_0000310147" description="Probable nicotinate-nucleotide adenylyltransferase">
    <location>
        <begin position="1"/>
        <end position="213"/>
    </location>
</feature>
<dbReference type="EC" id="2.7.7.18" evidence="1"/>
<dbReference type="EMBL" id="CP000266">
    <property type="protein sequence ID" value="ABF02927.1"/>
    <property type="molecule type" value="Genomic_DNA"/>
</dbReference>
<dbReference type="RefSeq" id="WP_000838889.1">
    <property type="nucleotide sequence ID" value="NC_008258.1"/>
</dbReference>
<dbReference type="SMR" id="Q0T6P9"/>
<dbReference type="GeneID" id="93776843"/>
<dbReference type="KEGG" id="sfv:SFV_0687"/>
<dbReference type="HOGENOM" id="CLU_069765_0_0_6"/>
<dbReference type="UniPathway" id="UPA00253">
    <property type="reaction ID" value="UER00332"/>
</dbReference>
<dbReference type="Proteomes" id="UP000000659">
    <property type="component" value="Chromosome"/>
</dbReference>
<dbReference type="GO" id="GO:0005524">
    <property type="term" value="F:ATP binding"/>
    <property type="evidence" value="ECO:0007669"/>
    <property type="project" value="UniProtKB-KW"/>
</dbReference>
<dbReference type="GO" id="GO:0004515">
    <property type="term" value="F:nicotinate-nucleotide adenylyltransferase activity"/>
    <property type="evidence" value="ECO:0007669"/>
    <property type="project" value="UniProtKB-UniRule"/>
</dbReference>
<dbReference type="GO" id="GO:0009435">
    <property type="term" value="P:NAD biosynthetic process"/>
    <property type="evidence" value="ECO:0007669"/>
    <property type="project" value="UniProtKB-UniRule"/>
</dbReference>
<dbReference type="CDD" id="cd02165">
    <property type="entry name" value="NMNAT"/>
    <property type="match status" value="1"/>
</dbReference>
<dbReference type="FunFam" id="3.40.50.620:FF:000039">
    <property type="entry name" value="Probable nicotinate-nucleotide adenylyltransferase"/>
    <property type="match status" value="1"/>
</dbReference>
<dbReference type="Gene3D" id="3.40.50.620">
    <property type="entry name" value="HUPs"/>
    <property type="match status" value="1"/>
</dbReference>
<dbReference type="HAMAP" id="MF_00244">
    <property type="entry name" value="NaMN_adenylyltr"/>
    <property type="match status" value="1"/>
</dbReference>
<dbReference type="InterPro" id="IPR004821">
    <property type="entry name" value="Cyt_trans-like"/>
</dbReference>
<dbReference type="InterPro" id="IPR005248">
    <property type="entry name" value="NadD/NMNAT"/>
</dbReference>
<dbReference type="InterPro" id="IPR014729">
    <property type="entry name" value="Rossmann-like_a/b/a_fold"/>
</dbReference>
<dbReference type="NCBIfam" id="TIGR00125">
    <property type="entry name" value="cyt_tran_rel"/>
    <property type="match status" value="1"/>
</dbReference>
<dbReference type="NCBIfam" id="TIGR00482">
    <property type="entry name" value="nicotinate (nicotinamide) nucleotide adenylyltransferase"/>
    <property type="match status" value="1"/>
</dbReference>
<dbReference type="NCBIfam" id="NF000839">
    <property type="entry name" value="PRK00071.1-1"/>
    <property type="match status" value="1"/>
</dbReference>
<dbReference type="NCBIfam" id="NF000840">
    <property type="entry name" value="PRK00071.1-3"/>
    <property type="match status" value="1"/>
</dbReference>
<dbReference type="PANTHER" id="PTHR39321">
    <property type="entry name" value="NICOTINATE-NUCLEOTIDE ADENYLYLTRANSFERASE-RELATED"/>
    <property type="match status" value="1"/>
</dbReference>
<dbReference type="PANTHER" id="PTHR39321:SF3">
    <property type="entry name" value="PHOSPHOPANTETHEINE ADENYLYLTRANSFERASE"/>
    <property type="match status" value="1"/>
</dbReference>
<dbReference type="Pfam" id="PF01467">
    <property type="entry name" value="CTP_transf_like"/>
    <property type="match status" value="1"/>
</dbReference>
<dbReference type="SUPFAM" id="SSF52374">
    <property type="entry name" value="Nucleotidylyl transferase"/>
    <property type="match status" value="1"/>
</dbReference>
<proteinExistence type="inferred from homology"/>
<evidence type="ECO:0000255" key="1">
    <source>
        <dbReference type="HAMAP-Rule" id="MF_00244"/>
    </source>
</evidence>
<gene>
    <name evidence="1" type="primary">nadD</name>
    <name type="ordered locus">SFV_0687</name>
</gene>